<protein>
    <recommendedName>
        <fullName>Metalloprotease MJ0996</fullName>
        <ecNumber>3.4.-.-</ecNumber>
    </recommendedName>
</protein>
<organism>
    <name type="scientific">Methanocaldococcus jannaschii (strain ATCC 43067 / DSM 2661 / JAL-1 / JCM 10045 / NBRC 100440)</name>
    <name type="common">Methanococcus jannaschii</name>
    <dbReference type="NCBI Taxonomy" id="243232"/>
    <lineage>
        <taxon>Archaea</taxon>
        <taxon>Methanobacteriati</taxon>
        <taxon>Methanobacteriota</taxon>
        <taxon>Methanomada group</taxon>
        <taxon>Methanococci</taxon>
        <taxon>Methanococcales</taxon>
        <taxon>Methanocaldococcaceae</taxon>
        <taxon>Methanocaldococcus</taxon>
    </lineage>
</organism>
<evidence type="ECO:0000250" key="1"/>
<evidence type="ECO:0000305" key="2"/>
<accession>Q58403</accession>
<gene>
    <name type="ordered locus">MJ0996</name>
</gene>
<keyword id="KW-0378">Hydrolase</keyword>
<keyword id="KW-0482">Metalloprotease</keyword>
<keyword id="KW-0645">Protease</keyword>
<keyword id="KW-1185">Reference proteome</keyword>
<name>Y996_METJA</name>
<proteinExistence type="inferred from homology"/>
<feature type="chain" id="PRO_0000142364" description="Metalloprotease MJ0996">
    <location>
        <begin position="1"/>
        <end position="451"/>
    </location>
</feature>
<sequence length="451" mass="49814">MLNLEKIEKLLEVGDYADIRINFGESNTITLKDGKIEEISSGFGNGVAVRVLYKNGWGFVTSNIVSEEEIEKLINKAYKMAKISNEYSEKEIILKDYKAIIDNYKMIGKINPTDVDIEEKKEIIIDTYKNMTDEKIKSISVSYSDVFGKRIFMISEGSRIEGEITRCIMYMNCVAKENGNLQYGAERTGGFGFEKIKDNYLNLALEAKNRALRLLKAKPCPKGKFKVILDPELAGVFIHEAVGHASEADLVLQNDSVFKDKLGERVGSEYVTVIDDATIEGAFGSYKYDDEGVEGKKTVIIENGILKTYLHSRETAGRMDAELTGNGRAEGLNKPIVRMSNTFIKPGDWSFEELLEDTKEGIFLKGSRGGQVDTGKGLFQFSAVEAYLIENGELTQVLKDAGLSGEILDILFKVDAVTKDFELSVGYCGKDGQSVPVGDGGGCVRTIATVS</sequence>
<dbReference type="EC" id="3.4.-.-"/>
<dbReference type="EMBL" id="L77117">
    <property type="protein sequence ID" value="AAB99001.1"/>
    <property type="molecule type" value="Genomic_DNA"/>
</dbReference>
<dbReference type="PIR" id="D64424">
    <property type="entry name" value="D64424"/>
</dbReference>
<dbReference type="RefSeq" id="WP_010870510.1">
    <property type="nucleotide sequence ID" value="NC_000909.1"/>
</dbReference>
<dbReference type="SMR" id="Q58403"/>
<dbReference type="STRING" id="243232.MJ_0996"/>
<dbReference type="PaxDb" id="243232-MJ_0996"/>
<dbReference type="EnsemblBacteria" id="AAB99001">
    <property type="protein sequence ID" value="AAB99001"/>
    <property type="gene ID" value="MJ_0996"/>
</dbReference>
<dbReference type="GeneID" id="1451894"/>
<dbReference type="KEGG" id="mja:MJ_0996"/>
<dbReference type="eggNOG" id="arCOG00321">
    <property type="taxonomic scope" value="Archaea"/>
</dbReference>
<dbReference type="HOGENOM" id="CLU_026425_1_2_2"/>
<dbReference type="InParanoid" id="Q58403"/>
<dbReference type="OrthoDB" id="98233at2157"/>
<dbReference type="PhylomeDB" id="Q58403"/>
<dbReference type="Proteomes" id="UP000000805">
    <property type="component" value="Chromosome"/>
</dbReference>
<dbReference type="GO" id="GO:0005829">
    <property type="term" value="C:cytosol"/>
    <property type="evidence" value="ECO:0000318"/>
    <property type="project" value="GO_Central"/>
</dbReference>
<dbReference type="GO" id="GO:0008237">
    <property type="term" value="F:metallopeptidase activity"/>
    <property type="evidence" value="ECO:0007669"/>
    <property type="project" value="UniProtKB-KW"/>
</dbReference>
<dbReference type="GO" id="GO:0006508">
    <property type="term" value="P:proteolysis"/>
    <property type="evidence" value="ECO:0007669"/>
    <property type="project" value="UniProtKB-KW"/>
</dbReference>
<dbReference type="Gene3D" id="3.30.2290.10">
    <property type="entry name" value="PmbA/TldD superfamily"/>
    <property type="match status" value="1"/>
</dbReference>
<dbReference type="InterPro" id="IPR045569">
    <property type="entry name" value="Metalloprtase-TldD/E_C"/>
</dbReference>
<dbReference type="InterPro" id="IPR045570">
    <property type="entry name" value="Metalloprtase-TldD/E_cen_dom"/>
</dbReference>
<dbReference type="InterPro" id="IPR002510">
    <property type="entry name" value="Metalloprtase-TldD/E_N"/>
</dbReference>
<dbReference type="InterPro" id="IPR051463">
    <property type="entry name" value="Peptidase_U62_metallo"/>
</dbReference>
<dbReference type="InterPro" id="IPR025502">
    <property type="entry name" value="TldD"/>
</dbReference>
<dbReference type="InterPro" id="IPR035068">
    <property type="entry name" value="TldD/PmbA_N"/>
</dbReference>
<dbReference type="InterPro" id="IPR036059">
    <property type="entry name" value="TldD/PmbA_sf"/>
</dbReference>
<dbReference type="PANTHER" id="PTHR30624:SF0">
    <property type="entry name" value="METALLOPROTEASE SLR0863"/>
    <property type="match status" value="1"/>
</dbReference>
<dbReference type="PANTHER" id="PTHR30624">
    <property type="entry name" value="UNCHARACTERIZED PROTEIN TLDD AND PMBA"/>
    <property type="match status" value="1"/>
</dbReference>
<dbReference type="Pfam" id="PF01523">
    <property type="entry name" value="PmbA_TldD_1st"/>
    <property type="match status" value="1"/>
</dbReference>
<dbReference type="Pfam" id="PF19290">
    <property type="entry name" value="PmbA_TldD_2nd"/>
    <property type="match status" value="1"/>
</dbReference>
<dbReference type="Pfam" id="PF19289">
    <property type="entry name" value="PmbA_TldD_3rd"/>
    <property type="match status" value="1"/>
</dbReference>
<dbReference type="PIRSF" id="PIRSF004919">
    <property type="entry name" value="TldD"/>
    <property type="match status" value="1"/>
</dbReference>
<dbReference type="SUPFAM" id="SSF111283">
    <property type="entry name" value="Putative modulator of DNA gyrase, PmbA/TldD"/>
    <property type="match status" value="1"/>
</dbReference>
<comment type="function">
    <text evidence="1">Probable metalloprotease.</text>
</comment>
<comment type="similarity">
    <text evidence="2">Belongs to the peptidase U62 family.</text>
</comment>
<reference key="1">
    <citation type="journal article" date="1996" name="Science">
        <title>Complete genome sequence of the methanogenic archaeon, Methanococcus jannaschii.</title>
        <authorList>
            <person name="Bult C.J."/>
            <person name="White O."/>
            <person name="Olsen G.J."/>
            <person name="Zhou L."/>
            <person name="Fleischmann R.D."/>
            <person name="Sutton G.G."/>
            <person name="Blake J.A."/>
            <person name="FitzGerald L.M."/>
            <person name="Clayton R.A."/>
            <person name="Gocayne J.D."/>
            <person name="Kerlavage A.R."/>
            <person name="Dougherty B.A."/>
            <person name="Tomb J.-F."/>
            <person name="Adams M.D."/>
            <person name="Reich C.I."/>
            <person name="Overbeek R."/>
            <person name="Kirkness E.F."/>
            <person name="Weinstock K.G."/>
            <person name="Merrick J.M."/>
            <person name="Glodek A."/>
            <person name="Scott J.L."/>
            <person name="Geoghagen N.S.M."/>
            <person name="Weidman J.F."/>
            <person name="Fuhrmann J.L."/>
            <person name="Nguyen D."/>
            <person name="Utterback T.R."/>
            <person name="Kelley J.M."/>
            <person name="Peterson J.D."/>
            <person name="Sadow P.W."/>
            <person name="Hanna M.C."/>
            <person name="Cotton M.D."/>
            <person name="Roberts K.M."/>
            <person name="Hurst M.A."/>
            <person name="Kaine B.P."/>
            <person name="Borodovsky M."/>
            <person name="Klenk H.-P."/>
            <person name="Fraser C.M."/>
            <person name="Smith H.O."/>
            <person name="Woese C.R."/>
            <person name="Venter J.C."/>
        </authorList>
    </citation>
    <scope>NUCLEOTIDE SEQUENCE [LARGE SCALE GENOMIC DNA]</scope>
    <source>
        <strain>ATCC 43067 / DSM 2661 / JAL-1 / JCM 10045 / NBRC 100440</strain>
    </source>
</reference>